<accession>Q8DK36</accession>
<sequence>MYFQDVIATLHQFWAAQGCLIAQPYDVEKGAGTKSPHTFLRALGPEPWAVAYVEPCRRPADGRYGENPNRYQYYYQYQVLIKPSPDNIQEIYLESLRALGIRPQDHDIRFVEDNWEDAAVGAWGVGWEVWLDGMEVTQFTYFQQCGGLDCRPVSIEITYGLERLTMYLQEVDAIASIRWNSTLTYGDVHLQGEIEQSTYNFEASDPERLFTLFSLYQQEAEQLLEKQLVLPSLDYVLKCSHTFNLLDARGVISVAERTRYIGRIRGLARRVAQAYVQQREALGFPLLKEPAAIAP</sequence>
<protein>
    <recommendedName>
        <fullName evidence="1">Glycine--tRNA ligase alpha subunit</fullName>
        <ecNumber evidence="1">6.1.1.14</ecNumber>
    </recommendedName>
    <alternativeName>
        <fullName evidence="1">Glycyl-tRNA synthetase alpha subunit</fullName>
        <shortName evidence="1">GlyRS</shortName>
    </alternativeName>
</protein>
<feature type="chain" id="PRO_0000072875" description="Glycine--tRNA ligase alpha subunit">
    <location>
        <begin position="1"/>
        <end position="295"/>
    </location>
</feature>
<keyword id="KW-0030">Aminoacyl-tRNA synthetase</keyword>
<keyword id="KW-0067">ATP-binding</keyword>
<keyword id="KW-0963">Cytoplasm</keyword>
<keyword id="KW-0436">Ligase</keyword>
<keyword id="KW-0547">Nucleotide-binding</keyword>
<keyword id="KW-0648">Protein biosynthesis</keyword>
<keyword id="KW-1185">Reference proteome</keyword>
<organism>
    <name type="scientific">Thermosynechococcus vestitus (strain NIES-2133 / IAM M-273 / BP-1)</name>
    <dbReference type="NCBI Taxonomy" id="197221"/>
    <lineage>
        <taxon>Bacteria</taxon>
        <taxon>Bacillati</taxon>
        <taxon>Cyanobacteriota</taxon>
        <taxon>Cyanophyceae</taxon>
        <taxon>Acaryochloridales</taxon>
        <taxon>Thermosynechococcaceae</taxon>
        <taxon>Thermosynechococcus</taxon>
    </lineage>
</organism>
<reference key="1">
    <citation type="journal article" date="2002" name="DNA Res.">
        <title>Complete genome structure of the thermophilic cyanobacterium Thermosynechococcus elongatus BP-1.</title>
        <authorList>
            <person name="Nakamura Y."/>
            <person name="Kaneko T."/>
            <person name="Sato S."/>
            <person name="Ikeuchi M."/>
            <person name="Katoh H."/>
            <person name="Sasamoto S."/>
            <person name="Watanabe A."/>
            <person name="Iriguchi M."/>
            <person name="Kawashima K."/>
            <person name="Kimura T."/>
            <person name="Kishida Y."/>
            <person name="Kiyokawa C."/>
            <person name="Kohara M."/>
            <person name="Matsumoto M."/>
            <person name="Matsuno A."/>
            <person name="Nakazaki N."/>
            <person name="Shimpo S."/>
            <person name="Sugimoto M."/>
            <person name="Takeuchi C."/>
            <person name="Yamada M."/>
            <person name="Tabata S."/>
        </authorList>
    </citation>
    <scope>NUCLEOTIDE SEQUENCE [LARGE SCALE GENOMIC DNA]</scope>
    <source>
        <strain>NIES-2133 / IAM M-273 / BP-1</strain>
    </source>
</reference>
<gene>
    <name evidence="1" type="primary">glyQ</name>
    <name type="ordered locus">tll1034</name>
</gene>
<evidence type="ECO:0000255" key="1">
    <source>
        <dbReference type="HAMAP-Rule" id="MF_00254"/>
    </source>
</evidence>
<evidence type="ECO:0000305" key="2"/>
<comment type="catalytic activity">
    <reaction evidence="1">
        <text>tRNA(Gly) + glycine + ATP = glycyl-tRNA(Gly) + AMP + diphosphate</text>
        <dbReference type="Rhea" id="RHEA:16013"/>
        <dbReference type="Rhea" id="RHEA-COMP:9664"/>
        <dbReference type="Rhea" id="RHEA-COMP:9683"/>
        <dbReference type="ChEBI" id="CHEBI:30616"/>
        <dbReference type="ChEBI" id="CHEBI:33019"/>
        <dbReference type="ChEBI" id="CHEBI:57305"/>
        <dbReference type="ChEBI" id="CHEBI:78442"/>
        <dbReference type="ChEBI" id="CHEBI:78522"/>
        <dbReference type="ChEBI" id="CHEBI:456215"/>
        <dbReference type="EC" id="6.1.1.14"/>
    </reaction>
</comment>
<comment type="subunit">
    <text evidence="1">Tetramer of two alpha and two beta subunits.</text>
</comment>
<comment type="subcellular location">
    <subcellularLocation>
        <location evidence="1">Cytoplasm</location>
    </subcellularLocation>
</comment>
<comment type="similarity">
    <text evidence="1">Belongs to the class-II aminoacyl-tRNA synthetase family.</text>
</comment>
<comment type="sequence caution" evidence="2">
    <conflict type="erroneous initiation">
        <sequence resource="EMBL-CDS" id="BAC08587"/>
    </conflict>
</comment>
<name>SYGA_THEVB</name>
<proteinExistence type="inferred from homology"/>
<dbReference type="EC" id="6.1.1.14" evidence="1"/>
<dbReference type="EMBL" id="BA000039">
    <property type="protein sequence ID" value="BAC08587.1"/>
    <property type="status" value="ALT_INIT"/>
    <property type="molecule type" value="Genomic_DNA"/>
</dbReference>
<dbReference type="RefSeq" id="NP_681825.1">
    <property type="nucleotide sequence ID" value="NC_004113.1"/>
</dbReference>
<dbReference type="RefSeq" id="WP_164920808.1">
    <property type="nucleotide sequence ID" value="NC_004113.1"/>
</dbReference>
<dbReference type="SMR" id="Q8DK36"/>
<dbReference type="STRING" id="197221.gene:10747627"/>
<dbReference type="EnsemblBacteria" id="BAC08587">
    <property type="protein sequence ID" value="BAC08587"/>
    <property type="gene ID" value="BAC08587"/>
</dbReference>
<dbReference type="KEGG" id="tel:tll1034"/>
<dbReference type="PATRIC" id="fig|197221.4.peg.1085"/>
<dbReference type="eggNOG" id="COG0752">
    <property type="taxonomic scope" value="Bacteria"/>
</dbReference>
<dbReference type="Proteomes" id="UP000000440">
    <property type="component" value="Chromosome"/>
</dbReference>
<dbReference type="GO" id="GO:0005829">
    <property type="term" value="C:cytosol"/>
    <property type="evidence" value="ECO:0007669"/>
    <property type="project" value="TreeGrafter"/>
</dbReference>
<dbReference type="GO" id="GO:0005524">
    <property type="term" value="F:ATP binding"/>
    <property type="evidence" value="ECO:0007669"/>
    <property type="project" value="UniProtKB-UniRule"/>
</dbReference>
<dbReference type="GO" id="GO:0004820">
    <property type="term" value="F:glycine-tRNA ligase activity"/>
    <property type="evidence" value="ECO:0007669"/>
    <property type="project" value="UniProtKB-UniRule"/>
</dbReference>
<dbReference type="GO" id="GO:0006426">
    <property type="term" value="P:glycyl-tRNA aminoacylation"/>
    <property type="evidence" value="ECO:0007669"/>
    <property type="project" value="UniProtKB-UniRule"/>
</dbReference>
<dbReference type="CDD" id="cd00733">
    <property type="entry name" value="GlyRS_alpha_core"/>
    <property type="match status" value="1"/>
</dbReference>
<dbReference type="FunFam" id="3.30.930.10:FF:000006">
    <property type="entry name" value="Glycine--tRNA ligase alpha subunit"/>
    <property type="match status" value="1"/>
</dbReference>
<dbReference type="Gene3D" id="3.30.930.10">
    <property type="entry name" value="Bira Bifunctional Protein, Domain 2"/>
    <property type="match status" value="1"/>
</dbReference>
<dbReference type="Gene3D" id="1.20.58.180">
    <property type="entry name" value="Class II aaRS and biotin synthetases, domain 2"/>
    <property type="match status" value="1"/>
</dbReference>
<dbReference type="HAMAP" id="MF_00254">
    <property type="entry name" value="Gly_tRNA_synth_alpha"/>
    <property type="match status" value="1"/>
</dbReference>
<dbReference type="InterPro" id="IPR045864">
    <property type="entry name" value="aa-tRNA-synth_II/BPL/LPL"/>
</dbReference>
<dbReference type="InterPro" id="IPR006194">
    <property type="entry name" value="Gly-tRNA-synth_heterodimer"/>
</dbReference>
<dbReference type="InterPro" id="IPR002310">
    <property type="entry name" value="Gly-tRNA_ligase_asu"/>
</dbReference>
<dbReference type="NCBIfam" id="TIGR00388">
    <property type="entry name" value="glyQ"/>
    <property type="match status" value="1"/>
</dbReference>
<dbReference type="NCBIfam" id="NF006827">
    <property type="entry name" value="PRK09348.1"/>
    <property type="match status" value="1"/>
</dbReference>
<dbReference type="PANTHER" id="PTHR30075:SF2">
    <property type="entry name" value="GLYCINE--TRNA LIGASE, CHLOROPLASTIC_MITOCHONDRIAL 2"/>
    <property type="match status" value="1"/>
</dbReference>
<dbReference type="PANTHER" id="PTHR30075">
    <property type="entry name" value="GLYCYL-TRNA SYNTHETASE"/>
    <property type="match status" value="1"/>
</dbReference>
<dbReference type="Pfam" id="PF02091">
    <property type="entry name" value="tRNA-synt_2e"/>
    <property type="match status" value="1"/>
</dbReference>
<dbReference type="PRINTS" id="PR01044">
    <property type="entry name" value="TRNASYNTHGA"/>
</dbReference>
<dbReference type="SUPFAM" id="SSF55681">
    <property type="entry name" value="Class II aaRS and biotin synthetases"/>
    <property type="match status" value="1"/>
</dbReference>
<dbReference type="PROSITE" id="PS50861">
    <property type="entry name" value="AA_TRNA_LIGASE_II_GLYAB"/>
    <property type="match status" value="1"/>
</dbReference>